<gene>
    <name evidence="1" type="primary">tsf</name>
    <name type="ordered locus">Dshi_1549</name>
</gene>
<sequence length="291" mass="30297">MAITAALVKELRDKTGAGMMDAKKALTETDGDMEAAVDWLRTKGLAKAAKKSGRTAAEGLVGVAVADGAAVAVEVNSETDFVAKNAEFQAMVASFAEAALSASDLDALKGTEVGGKTVETILTDKIATIGENMTLRRMEKLSGETVVSYVHNAAADGMGKIGVLVALTGADNGIGKQIAMHIAAANPASLSEADLDPAVVEKERQVQIDIARESGKPEQVIEKMIVGRMKKFLSEVTLLGQAFVVNPDLTVGDAAKEAGVEITGFVRMEVGEGIEKVEEDFAAEVAKTMNG</sequence>
<name>EFTS_DINSH</name>
<reference key="1">
    <citation type="journal article" date="2010" name="ISME J.">
        <title>The complete genome sequence of the algal symbiont Dinoroseobacter shibae: a hitchhiker's guide to life in the sea.</title>
        <authorList>
            <person name="Wagner-Dobler I."/>
            <person name="Ballhausen B."/>
            <person name="Berger M."/>
            <person name="Brinkhoff T."/>
            <person name="Buchholz I."/>
            <person name="Bunk B."/>
            <person name="Cypionka H."/>
            <person name="Daniel R."/>
            <person name="Drepper T."/>
            <person name="Gerdts G."/>
            <person name="Hahnke S."/>
            <person name="Han C."/>
            <person name="Jahn D."/>
            <person name="Kalhoefer D."/>
            <person name="Kiss H."/>
            <person name="Klenk H.P."/>
            <person name="Kyrpides N."/>
            <person name="Liebl W."/>
            <person name="Liesegang H."/>
            <person name="Meincke L."/>
            <person name="Pati A."/>
            <person name="Petersen J."/>
            <person name="Piekarski T."/>
            <person name="Pommerenke C."/>
            <person name="Pradella S."/>
            <person name="Pukall R."/>
            <person name="Rabus R."/>
            <person name="Stackebrandt E."/>
            <person name="Thole S."/>
            <person name="Thompson L."/>
            <person name="Tielen P."/>
            <person name="Tomasch J."/>
            <person name="von Jan M."/>
            <person name="Wanphrut N."/>
            <person name="Wichels A."/>
            <person name="Zech H."/>
            <person name="Simon M."/>
        </authorList>
    </citation>
    <scope>NUCLEOTIDE SEQUENCE [LARGE SCALE GENOMIC DNA]</scope>
    <source>
        <strain>DSM 16493 / NCIMB 14021 / DFL 12</strain>
    </source>
</reference>
<feature type="chain" id="PRO_1000074861" description="Elongation factor Ts">
    <location>
        <begin position="1"/>
        <end position="291"/>
    </location>
</feature>
<feature type="region of interest" description="Involved in Mg(2+) ion dislocation from EF-Tu" evidence="1">
    <location>
        <begin position="79"/>
        <end position="82"/>
    </location>
</feature>
<comment type="function">
    <text evidence="1">Associates with the EF-Tu.GDP complex and induces the exchange of GDP to GTP. It remains bound to the aminoacyl-tRNA.EF-Tu.GTP complex up to the GTP hydrolysis stage on the ribosome.</text>
</comment>
<comment type="subcellular location">
    <subcellularLocation>
        <location evidence="1">Cytoplasm</location>
    </subcellularLocation>
</comment>
<comment type="similarity">
    <text evidence="1">Belongs to the EF-Ts family.</text>
</comment>
<organism>
    <name type="scientific">Dinoroseobacter shibae (strain DSM 16493 / NCIMB 14021 / DFL 12)</name>
    <dbReference type="NCBI Taxonomy" id="398580"/>
    <lineage>
        <taxon>Bacteria</taxon>
        <taxon>Pseudomonadati</taxon>
        <taxon>Pseudomonadota</taxon>
        <taxon>Alphaproteobacteria</taxon>
        <taxon>Rhodobacterales</taxon>
        <taxon>Roseobacteraceae</taxon>
        <taxon>Dinoroseobacter</taxon>
    </lineage>
</organism>
<evidence type="ECO:0000255" key="1">
    <source>
        <dbReference type="HAMAP-Rule" id="MF_00050"/>
    </source>
</evidence>
<proteinExistence type="inferred from homology"/>
<dbReference type="EMBL" id="CP000830">
    <property type="protein sequence ID" value="ABV93291.1"/>
    <property type="molecule type" value="Genomic_DNA"/>
</dbReference>
<dbReference type="RefSeq" id="WP_012178221.1">
    <property type="nucleotide sequence ID" value="NC_009952.1"/>
</dbReference>
<dbReference type="SMR" id="A8LK92"/>
<dbReference type="STRING" id="398580.Dshi_1549"/>
<dbReference type="KEGG" id="dsh:Dshi_1549"/>
<dbReference type="eggNOG" id="COG0264">
    <property type="taxonomic scope" value="Bacteria"/>
</dbReference>
<dbReference type="HOGENOM" id="CLU_047155_0_2_5"/>
<dbReference type="OrthoDB" id="9808348at2"/>
<dbReference type="Proteomes" id="UP000006833">
    <property type="component" value="Chromosome"/>
</dbReference>
<dbReference type="GO" id="GO:0005737">
    <property type="term" value="C:cytoplasm"/>
    <property type="evidence" value="ECO:0007669"/>
    <property type="project" value="UniProtKB-SubCell"/>
</dbReference>
<dbReference type="GO" id="GO:0003746">
    <property type="term" value="F:translation elongation factor activity"/>
    <property type="evidence" value="ECO:0007669"/>
    <property type="project" value="UniProtKB-UniRule"/>
</dbReference>
<dbReference type="CDD" id="cd14275">
    <property type="entry name" value="UBA_EF-Ts"/>
    <property type="match status" value="1"/>
</dbReference>
<dbReference type="FunFam" id="1.10.286.20:FF:000001">
    <property type="entry name" value="Elongation factor Ts"/>
    <property type="match status" value="1"/>
</dbReference>
<dbReference type="FunFam" id="1.10.8.10:FF:000001">
    <property type="entry name" value="Elongation factor Ts"/>
    <property type="match status" value="1"/>
</dbReference>
<dbReference type="Gene3D" id="1.10.286.20">
    <property type="match status" value="1"/>
</dbReference>
<dbReference type="Gene3D" id="1.10.8.10">
    <property type="entry name" value="DNA helicase RuvA subunit, C-terminal domain"/>
    <property type="match status" value="1"/>
</dbReference>
<dbReference type="Gene3D" id="3.30.479.20">
    <property type="entry name" value="Elongation factor Ts, dimerisation domain"/>
    <property type="match status" value="2"/>
</dbReference>
<dbReference type="HAMAP" id="MF_00050">
    <property type="entry name" value="EF_Ts"/>
    <property type="match status" value="1"/>
</dbReference>
<dbReference type="InterPro" id="IPR036402">
    <property type="entry name" value="EF-Ts_dimer_sf"/>
</dbReference>
<dbReference type="InterPro" id="IPR001816">
    <property type="entry name" value="Transl_elong_EFTs/EF1B"/>
</dbReference>
<dbReference type="InterPro" id="IPR014039">
    <property type="entry name" value="Transl_elong_EFTs/EF1B_dimer"/>
</dbReference>
<dbReference type="InterPro" id="IPR018101">
    <property type="entry name" value="Transl_elong_Ts_CS"/>
</dbReference>
<dbReference type="InterPro" id="IPR009060">
    <property type="entry name" value="UBA-like_sf"/>
</dbReference>
<dbReference type="NCBIfam" id="TIGR00116">
    <property type="entry name" value="tsf"/>
    <property type="match status" value="1"/>
</dbReference>
<dbReference type="PANTHER" id="PTHR11741">
    <property type="entry name" value="ELONGATION FACTOR TS"/>
    <property type="match status" value="1"/>
</dbReference>
<dbReference type="PANTHER" id="PTHR11741:SF0">
    <property type="entry name" value="ELONGATION FACTOR TS, MITOCHONDRIAL"/>
    <property type="match status" value="1"/>
</dbReference>
<dbReference type="Pfam" id="PF00889">
    <property type="entry name" value="EF_TS"/>
    <property type="match status" value="1"/>
</dbReference>
<dbReference type="SUPFAM" id="SSF54713">
    <property type="entry name" value="Elongation factor Ts (EF-Ts), dimerisation domain"/>
    <property type="match status" value="2"/>
</dbReference>
<dbReference type="SUPFAM" id="SSF46934">
    <property type="entry name" value="UBA-like"/>
    <property type="match status" value="1"/>
</dbReference>
<dbReference type="PROSITE" id="PS01126">
    <property type="entry name" value="EF_TS_1"/>
    <property type="match status" value="1"/>
</dbReference>
<dbReference type="PROSITE" id="PS01127">
    <property type="entry name" value="EF_TS_2"/>
    <property type="match status" value="1"/>
</dbReference>
<accession>A8LK92</accession>
<keyword id="KW-0963">Cytoplasm</keyword>
<keyword id="KW-0251">Elongation factor</keyword>
<keyword id="KW-0648">Protein biosynthesis</keyword>
<keyword id="KW-1185">Reference proteome</keyword>
<protein>
    <recommendedName>
        <fullName evidence="1">Elongation factor Ts</fullName>
        <shortName evidence="1">EF-Ts</shortName>
    </recommendedName>
</protein>